<dbReference type="EC" id="3.4.19.12"/>
<dbReference type="EMBL" id="BC161716">
    <property type="protein sequence ID" value="AAI61716.1"/>
    <property type="molecule type" value="mRNA"/>
</dbReference>
<dbReference type="RefSeq" id="NP_001121345.1">
    <property type="nucleotide sequence ID" value="NM_001127873.1"/>
</dbReference>
<dbReference type="GeneID" id="100158436"/>
<dbReference type="KEGG" id="xla:100158436"/>
<dbReference type="AGR" id="Xenbase:XB-GENE-966533"/>
<dbReference type="CTD" id="100158436"/>
<dbReference type="Xenbase" id="XB-GENE-966533">
    <property type="gene designation" value="usp20.L"/>
</dbReference>
<dbReference type="OrthoDB" id="73004at2759"/>
<dbReference type="Proteomes" id="UP000186698">
    <property type="component" value="Chromosome 8L"/>
</dbReference>
<dbReference type="Bgee" id="100158436">
    <property type="expression patterns" value="Expressed in brain and 20 other cell types or tissues"/>
</dbReference>
<dbReference type="GO" id="GO:0005813">
    <property type="term" value="C:centrosome"/>
    <property type="evidence" value="ECO:0000250"/>
    <property type="project" value="UniProtKB"/>
</dbReference>
<dbReference type="GO" id="GO:0048471">
    <property type="term" value="C:perinuclear region of cytoplasm"/>
    <property type="evidence" value="ECO:0007669"/>
    <property type="project" value="UniProtKB-SubCell"/>
</dbReference>
<dbReference type="GO" id="GO:0004843">
    <property type="term" value="F:cysteine-type deubiquitinase activity"/>
    <property type="evidence" value="ECO:0000250"/>
    <property type="project" value="UniProtKB"/>
</dbReference>
<dbReference type="GO" id="GO:0004197">
    <property type="term" value="F:cysteine-type endopeptidase activity"/>
    <property type="evidence" value="ECO:0000250"/>
    <property type="project" value="UniProtKB"/>
</dbReference>
<dbReference type="GO" id="GO:0008270">
    <property type="term" value="F:zinc ion binding"/>
    <property type="evidence" value="ECO:0007669"/>
    <property type="project" value="UniProtKB-KW"/>
</dbReference>
<dbReference type="GO" id="GO:0006897">
    <property type="term" value="P:endocytosis"/>
    <property type="evidence" value="ECO:0007669"/>
    <property type="project" value="UniProtKB-KW"/>
</dbReference>
<dbReference type="GO" id="GO:0007399">
    <property type="term" value="P:nervous system development"/>
    <property type="evidence" value="ECO:0000318"/>
    <property type="project" value="GO_Central"/>
</dbReference>
<dbReference type="GO" id="GO:0016579">
    <property type="term" value="P:protein deubiquitination"/>
    <property type="evidence" value="ECO:0000250"/>
    <property type="project" value="UniProtKB"/>
</dbReference>
<dbReference type="GO" id="GO:0071108">
    <property type="term" value="P:protein K48-linked deubiquitination"/>
    <property type="evidence" value="ECO:0000250"/>
    <property type="project" value="UniProtKB"/>
</dbReference>
<dbReference type="GO" id="GO:0070536">
    <property type="term" value="P:protein K63-linked deubiquitination"/>
    <property type="evidence" value="ECO:0000250"/>
    <property type="project" value="UniProtKB"/>
</dbReference>
<dbReference type="GO" id="GO:0006508">
    <property type="term" value="P:proteolysis"/>
    <property type="evidence" value="ECO:0007669"/>
    <property type="project" value="UniProtKB-KW"/>
</dbReference>
<dbReference type="GO" id="GO:0008277">
    <property type="term" value="P:regulation of G protein-coupled receptor signaling pathway"/>
    <property type="evidence" value="ECO:0000250"/>
    <property type="project" value="UniProtKB"/>
</dbReference>
<dbReference type="CDD" id="cd02674">
    <property type="entry name" value="Peptidase_C19R"/>
    <property type="match status" value="1"/>
</dbReference>
<dbReference type="FunFam" id="3.30.2230.10:FF:000001">
    <property type="entry name" value="Ubiquitinyl hydrolase 1"/>
    <property type="match status" value="1"/>
</dbReference>
<dbReference type="FunFam" id="3.30.2230.10:FF:000002">
    <property type="entry name" value="Ubiquitinyl hydrolase 1"/>
    <property type="match status" value="1"/>
</dbReference>
<dbReference type="Gene3D" id="3.90.70.10">
    <property type="entry name" value="Cysteine proteinases"/>
    <property type="match status" value="2"/>
</dbReference>
<dbReference type="Gene3D" id="3.30.2230.10">
    <property type="entry name" value="DUSP-like"/>
    <property type="match status" value="2"/>
</dbReference>
<dbReference type="Gene3D" id="3.30.40.10">
    <property type="entry name" value="Zinc/RING finger domain, C3HC4 (zinc finger)"/>
    <property type="match status" value="1"/>
</dbReference>
<dbReference type="InterPro" id="IPR035927">
    <property type="entry name" value="DUSP-like_sf"/>
</dbReference>
<dbReference type="InterPro" id="IPR038765">
    <property type="entry name" value="Papain-like_cys_pep_sf"/>
</dbReference>
<dbReference type="InterPro" id="IPR006615">
    <property type="entry name" value="Pept_C19_DUSP"/>
</dbReference>
<dbReference type="InterPro" id="IPR001394">
    <property type="entry name" value="Peptidase_C19_UCH"/>
</dbReference>
<dbReference type="InterPro" id="IPR050185">
    <property type="entry name" value="Ub_carboxyl-term_hydrolase"/>
</dbReference>
<dbReference type="InterPro" id="IPR018200">
    <property type="entry name" value="USP_CS"/>
</dbReference>
<dbReference type="InterPro" id="IPR028889">
    <property type="entry name" value="USP_dom"/>
</dbReference>
<dbReference type="InterPro" id="IPR013083">
    <property type="entry name" value="Znf_RING/FYVE/PHD"/>
</dbReference>
<dbReference type="InterPro" id="IPR001607">
    <property type="entry name" value="Znf_UBP"/>
</dbReference>
<dbReference type="PANTHER" id="PTHR21646">
    <property type="entry name" value="UBIQUITIN CARBOXYL-TERMINAL HYDROLASE"/>
    <property type="match status" value="1"/>
</dbReference>
<dbReference type="PANTHER" id="PTHR21646:SF13">
    <property type="entry name" value="UBIQUITIN CARBOXYL-TERMINAL HYDROLASE 20"/>
    <property type="match status" value="1"/>
</dbReference>
<dbReference type="Pfam" id="PF06337">
    <property type="entry name" value="DUSP"/>
    <property type="match status" value="2"/>
</dbReference>
<dbReference type="Pfam" id="PF00443">
    <property type="entry name" value="UCH"/>
    <property type="match status" value="1"/>
</dbReference>
<dbReference type="Pfam" id="PF02148">
    <property type="entry name" value="zf-UBP"/>
    <property type="match status" value="1"/>
</dbReference>
<dbReference type="SMART" id="SM00695">
    <property type="entry name" value="DUSP"/>
    <property type="match status" value="2"/>
</dbReference>
<dbReference type="SUPFAM" id="SSF54001">
    <property type="entry name" value="Cysteine proteinases"/>
    <property type="match status" value="1"/>
</dbReference>
<dbReference type="SUPFAM" id="SSF143791">
    <property type="entry name" value="DUSP-like"/>
    <property type="match status" value="2"/>
</dbReference>
<dbReference type="SUPFAM" id="SSF57850">
    <property type="entry name" value="RING/U-box"/>
    <property type="match status" value="1"/>
</dbReference>
<dbReference type="PROSITE" id="PS51283">
    <property type="entry name" value="DUSP"/>
    <property type="match status" value="2"/>
</dbReference>
<dbReference type="PROSITE" id="PS00972">
    <property type="entry name" value="USP_1"/>
    <property type="match status" value="1"/>
</dbReference>
<dbReference type="PROSITE" id="PS00973">
    <property type="entry name" value="USP_2"/>
    <property type="match status" value="1"/>
</dbReference>
<dbReference type="PROSITE" id="PS50235">
    <property type="entry name" value="USP_3"/>
    <property type="match status" value="1"/>
</dbReference>
<dbReference type="PROSITE" id="PS50271">
    <property type="entry name" value="ZF_UBP"/>
    <property type="match status" value="1"/>
</dbReference>
<evidence type="ECO:0000250" key="1"/>
<evidence type="ECO:0000255" key="2">
    <source>
        <dbReference type="PROSITE-ProRule" id="PRU00502"/>
    </source>
</evidence>
<evidence type="ECO:0000255" key="3">
    <source>
        <dbReference type="PROSITE-ProRule" id="PRU00613"/>
    </source>
</evidence>
<evidence type="ECO:0000255" key="4">
    <source>
        <dbReference type="PROSITE-ProRule" id="PRU10092"/>
    </source>
</evidence>
<evidence type="ECO:0000255" key="5">
    <source>
        <dbReference type="PROSITE-ProRule" id="PRU10093"/>
    </source>
</evidence>
<evidence type="ECO:0000256" key="6">
    <source>
        <dbReference type="SAM" id="MobiDB-lite"/>
    </source>
</evidence>
<evidence type="ECO:0000305" key="7"/>
<keyword id="KW-0963">Cytoplasm</keyword>
<keyword id="KW-0206">Cytoskeleton</keyword>
<keyword id="KW-0254">Endocytosis</keyword>
<keyword id="KW-0378">Hydrolase</keyword>
<keyword id="KW-0479">Metal-binding</keyword>
<keyword id="KW-0645">Protease</keyword>
<keyword id="KW-1185">Reference proteome</keyword>
<keyword id="KW-0677">Repeat</keyword>
<keyword id="KW-0788">Thiol protease</keyword>
<keyword id="KW-0833">Ubl conjugation pathway</keyword>
<keyword id="KW-0862">Zinc</keyword>
<keyword id="KW-0863">Zinc-finger</keyword>
<proteinExistence type="evidence at transcript level"/>
<gene>
    <name type="primary">usp20</name>
</gene>
<organism>
    <name type="scientific">Xenopus laevis</name>
    <name type="common">African clawed frog</name>
    <dbReference type="NCBI Taxonomy" id="8355"/>
    <lineage>
        <taxon>Eukaryota</taxon>
        <taxon>Metazoa</taxon>
        <taxon>Chordata</taxon>
        <taxon>Craniata</taxon>
        <taxon>Vertebrata</taxon>
        <taxon>Euteleostomi</taxon>
        <taxon>Amphibia</taxon>
        <taxon>Batrachia</taxon>
        <taxon>Anura</taxon>
        <taxon>Pipoidea</taxon>
        <taxon>Pipidae</taxon>
        <taxon>Xenopodinae</taxon>
        <taxon>Xenopus</taxon>
        <taxon>Xenopus</taxon>
    </lineage>
</organism>
<protein>
    <recommendedName>
        <fullName>Ubiquitin carboxyl-terminal hydrolase 20</fullName>
        <ecNumber>3.4.19.12</ecNumber>
    </recommendedName>
    <alternativeName>
        <fullName>Deubiquitinating enzyme 20</fullName>
    </alternativeName>
    <alternativeName>
        <fullName>Ubiquitin thioesterase 20</fullName>
    </alternativeName>
    <alternativeName>
        <fullName>Ubiquitin-specific-processing protease 20</fullName>
    </alternativeName>
</protein>
<comment type="function">
    <text evidence="1">Deubiquitinating enzyme involved in beta-2 adrenergic receptor (adrb2) recycling. Acts as a regulator of G-protein coupled receptor (GPCR) signaling by mediating the deubiquitination beta-2 adrenergic receptor (adrb2). Plays a central role in adrb2 recycling and resensitization after prolonged agonist stimulation by constitutively binding adrb2, mediating deubiquitination of adrb2 and inhibiting lysosomal trafficking of adrb2. Mediates deubiquitination of both 'Lys-48'- and 'Lys-63'-linked polyubiquitin chains (By similarity).</text>
</comment>
<comment type="catalytic activity">
    <reaction>
        <text>Thiol-dependent hydrolysis of ester, thioester, amide, peptide and isopeptide bonds formed by the C-terminal Gly of ubiquitin (a 76-residue protein attached to proteins as an intracellular targeting signal).</text>
        <dbReference type="EC" id="3.4.19.12"/>
    </reaction>
</comment>
<comment type="subcellular location">
    <subcellularLocation>
        <location evidence="1">Cytoplasm</location>
        <location evidence="1">Perinuclear region</location>
    </subcellularLocation>
    <subcellularLocation>
        <location evidence="1">Cytoplasm</location>
        <location evidence="1">Cytoskeleton</location>
        <location evidence="1">Microtubule organizing center</location>
        <location evidence="1">Centrosome</location>
    </subcellularLocation>
</comment>
<comment type="domain">
    <text evidence="1">The UBP-type zinc finger binds 3 zinc ions. However, it does not bind ubiquitin, probably because the conserved Arg in position 55 is replaced by a Glu residue (By similarity).</text>
</comment>
<comment type="similarity">
    <text evidence="7">Belongs to the peptidase C19 family. USP20/USP33 subfamily.</text>
</comment>
<name>UBP20_XENLA</name>
<sequence length="840" mass="94092">MADAEDFCPHLDSIGEVTKEDLILKSKGTCESCGVGGPNLWACLQDGCQSVGCGESYADHSTLHAQDFPSPAHPLKSVPIAVGDDGESESDEDDIKPRGLTGMKNIGNSCYMNAALQALSNCPPLTQFFLECGGLVRTDKKPALCKSYQKLVSELWHKKRPSYVVPSSLYHGIKLINPLFRGYSQQDTQEFLRCLMDQLHEELKEPILPENQEQEEEERDDQREGERGGTTEEDFLSCDSGGEMGDGEGGGGVGTLSEMELLIREEVGRGLSEKEKLKERKLSYCHRRTSSEQADEDADVDTAMIPEPDNDAYMHCSSRSCSPHPVESISKHSSTPPRSSPLRTAHSYVLKKAQVLSGGKKRSEVRYRSVISDIFDGSILSLVQCLTCDRVSTTIETFQDLSLPIPGKEDLAKLHSTIHQSTVIKAGTCGDSYAAQGWLAFVMDYIRRFVVSCIPSWFWGPMITLEDCLAAFFAADELKGDNMYSCERCKKLRNGVKYCKVLRLPEVLCIHLKRFRHEVMYSFKIGSHVSFPLEGLNLRPFLAKECVSRITTYDLLAVICHHGSASSGHYISYCQNVINGQWYEFDDQYVTEVHETVVQNAEAYVLFYRKSSEEAERERQKVVSLAAMKESGLLQFYISREWLNKFNTFAEPGPISNQSFLCAHGGIPPNKYHYIDDLVVILPQSVWEYLYNRFGGGPAVNHLYVCSICQVEIEALAKRRKTEIDTFIKLNKAFQAEEAPSVIYCISMQWFREWEAFVKAKDSDPPGPIDNSKVALTKSSGHVQLKQGADYGQISEETWNYLLNIYGGGPEIAIRQTVAQYQDPEHLHGEQKIEAETRAG</sequence>
<feature type="chain" id="PRO_0000390421" description="Ubiquitin carboxyl-terminal hydrolase 20">
    <location>
        <begin position="1"/>
        <end position="840"/>
    </location>
</feature>
<feature type="domain" description="USP">
    <location>
        <begin position="101"/>
        <end position="611"/>
    </location>
</feature>
<feature type="domain" description="DUSP 1" evidence="3">
    <location>
        <begin position="613"/>
        <end position="706"/>
    </location>
</feature>
<feature type="domain" description="DUSP 2" evidence="3">
    <location>
        <begin position="715"/>
        <end position="818"/>
    </location>
</feature>
<feature type="zinc finger region" description="UBP-type; degenerate" evidence="2">
    <location>
        <begin position="6"/>
        <end position="117"/>
    </location>
</feature>
<feature type="region of interest" description="Disordered" evidence="6">
    <location>
        <begin position="205"/>
        <end position="254"/>
    </location>
</feature>
<feature type="region of interest" description="Disordered" evidence="6">
    <location>
        <begin position="315"/>
        <end position="342"/>
    </location>
</feature>
<feature type="compositionally biased region" description="Basic and acidic residues" evidence="6">
    <location>
        <begin position="220"/>
        <end position="230"/>
    </location>
</feature>
<feature type="compositionally biased region" description="Gly residues" evidence="6">
    <location>
        <begin position="242"/>
        <end position="254"/>
    </location>
</feature>
<feature type="compositionally biased region" description="Low complexity" evidence="6">
    <location>
        <begin position="333"/>
        <end position="342"/>
    </location>
</feature>
<feature type="active site" description="Nucleophile" evidence="4 5">
    <location>
        <position position="110"/>
    </location>
</feature>
<feature type="active site" description="Proton acceptor" evidence="4 5">
    <location>
        <position position="569"/>
    </location>
</feature>
<feature type="binding site" evidence="2">
    <location>
        <position position="30"/>
    </location>
    <ligand>
        <name>Zn(2+)</name>
        <dbReference type="ChEBI" id="CHEBI:29105"/>
    </ligand>
</feature>
<feature type="binding site" evidence="2">
    <location>
        <position position="33"/>
    </location>
    <ligand>
        <name>Zn(2+)</name>
        <dbReference type="ChEBI" id="CHEBI:29105"/>
    </ligand>
</feature>
<feature type="binding site" evidence="2">
    <location>
        <position position="53"/>
    </location>
    <ligand>
        <name>Zn(2+)</name>
        <dbReference type="ChEBI" id="CHEBI:29105"/>
    </ligand>
</feature>
<feature type="binding site" evidence="2">
    <location>
        <position position="60"/>
    </location>
    <ligand>
        <name>Zn(2+)</name>
        <dbReference type="ChEBI" id="CHEBI:29105"/>
    </ligand>
</feature>
<reference key="1">
    <citation type="submission" date="2008-04" db="EMBL/GenBank/DDBJ databases">
        <authorList>
            <consortium name="NIH - Xenopus Gene Collection (XGC) project"/>
        </authorList>
    </citation>
    <scope>NUCLEOTIDE SEQUENCE [LARGE SCALE MRNA]</scope>
    <source>
        <tissue>Ovary</tissue>
    </source>
</reference>
<accession>B1WBD7</accession>